<keyword id="KW-0328">Glycosyltransferase</keyword>
<keyword id="KW-0808">Transferase</keyword>
<organism>
    <name type="scientific">Salmonella paratyphi A (strain AKU_12601)</name>
    <dbReference type="NCBI Taxonomy" id="554290"/>
    <lineage>
        <taxon>Bacteria</taxon>
        <taxon>Pseudomonadati</taxon>
        <taxon>Pseudomonadota</taxon>
        <taxon>Gammaproteobacteria</taxon>
        <taxon>Enterobacterales</taxon>
        <taxon>Enterobacteriaceae</taxon>
        <taxon>Salmonella</taxon>
    </lineage>
</organism>
<accession>B5BAJ8</accession>
<protein>
    <recommendedName>
        <fullName evidence="1">Thymidine phosphorylase</fullName>
        <ecNumber evidence="1">2.4.2.4</ecNumber>
    </recommendedName>
    <alternativeName>
        <fullName evidence="1">TdRPase</fullName>
    </alternativeName>
</protein>
<evidence type="ECO:0000255" key="1">
    <source>
        <dbReference type="HAMAP-Rule" id="MF_01628"/>
    </source>
</evidence>
<reference key="1">
    <citation type="journal article" date="2009" name="BMC Genomics">
        <title>Pseudogene accumulation in the evolutionary histories of Salmonella enterica serovars Paratyphi A and Typhi.</title>
        <authorList>
            <person name="Holt K.E."/>
            <person name="Thomson N.R."/>
            <person name="Wain J."/>
            <person name="Langridge G.C."/>
            <person name="Hasan R."/>
            <person name="Bhutta Z.A."/>
            <person name="Quail M.A."/>
            <person name="Norbertczak H."/>
            <person name="Walker D."/>
            <person name="Simmonds M."/>
            <person name="White B."/>
            <person name="Bason N."/>
            <person name="Mungall K."/>
            <person name="Dougan G."/>
            <person name="Parkhill J."/>
        </authorList>
    </citation>
    <scope>NUCLEOTIDE SEQUENCE [LARGE SCALE GENOMIC DNA]</scope>
    <source>
        <strain>AKU_12601</strain>
    </source>
</reference>
<dbReference type="EC" id="2.4.2.4" evidence="1"/>
<dbReference type="EMBL" id="FM200053">
    <property type="protein sequence ID" value="CAR62364.1"/>
    <property type="molecule type" value="Genomic_DNA"/>
</dbReference>
<dbReference type="RefSeq" id="WP_000477835.1">
    <property type="nucleotide sequence ID" value="NC_011147.1"/>
</dbReference>
<dbReference type="SMR" id="B5BAJ8"/>
<dbReference type="KEGG" id="sek:SSPA4067"/>
<dbReference type="HOGENOM" id="CLU_025040_0_1_6"/>
<dbReference type="UniPathway" id="UPA00578">
    <property type="reaction ID" value="UER00638"/>
</dbReference>
<dbReference type="Proteomes" id="UP000001869">
    <property type="component" value="Chromosome"/>
</dbReference>
<dbReference type="GO" id="GO:0005829">
    <property type="term" value="C:cytosol"/>
    <property type="evidence" value="ECO:0007669"/>
    <property type="project" value="TreeGrafter"/>
</dbReference>
<dbReference type="GO" id="GO:0004645">
    <property type="term" value="F:1,4-alpha-oligoglucan phosphorylase activity"/>
    <property type="evidence" value="ECO:0007669"/>
    <property type="project" value="InterPro"/>
</dbReference>
<dbReference type="GO" id="GO:0009032">
    <property type="term" value="F:thymidine phosphorylase activity"/>
    <property type="evidence" value="ECO:0007669"/>
    <property type="project" value="UniProtKB-UniRule"/>
</dbReference>
<dbReference type="GO" id="GO:0006206">
    <property type="term" value="P:pyrimidine nucleobase metabolic process"/>
    <property type="evidence" value="ECO:0007669"/>
    <property type="project" value="InterPro"/>
</dbReference>
<dbReference type="GO" id="GO:0046104">
    <property type="term" value="P:thymidine metabolic process"/>
    <property type="evidence" value="ECO:0007669"/>
    <property type="project" value="UniProtKB-UniRule"/>
</dbReference>
<dbReference type="FunFam" id="3.40.1030.10:FF:000001">
    <property type="entry name" value="Thymidine phosphorylase"/>
    <property type="match status" value="1"/>
</dbReference>
<dbReference type="FunFam" id="3.90.1170.30:FF:000001">
    <property type="entry name" value="Thymidine phosphorylase"/>
    <property type="match status" value="1"/>
</dbReference>
<dbReference type="Gene3D" id="3.40.1030.10">
    <property type="entry name" value="Nucleoside phosphorylase/phosphoribosyltransferase catalytic domain"/>
    <property type="match status" value="1"/>
</dbReference>
<dbReference type="Gene3D" id="3.90.1170.30">
    <property type="entry name" value="Pyrimidine nucleoside phosphorylase-like, C-terminal domain"/>
    <property type="match status" value="1"/>
</dbReference>
<dbReference type="Gene3D" id="1.20.970.10">
    <property type="entry name" value="Transferase, Pyrimidine Nucleoside Phosphorylase, Chain C"/>
    <property type="match status" value="1"/>
</dbReference>
<dbReference type="HAMAP" id="MF_01628">
    <property type="entry name" value="Thymid_phosp"/>
    <property type="match status" value="1"/>
</dbReference>
<dbReference type="InterPro" id="IPR000312">
    <property type="entry name" value="Glycosyl_Trfase_fam3"/>
</dbReference>
<dbReference type="InterPro" id="IPR017459">
    <property type="entry name" value="Glycosyl_Trfase_fam3_N_dom"/>
</dbReference>
<dbReference type="InterPro" id="IPR036320">
    <property type="entry name" value="Glycosyl_Trfase_fam3_N_dom_sf"/>
</dbReference>
<dbReference type="InterPro" id="IPR035902">
    <property type="entry name" value="Nuc_phospho_transferase"/>
</dbReference>
<dbReference type="InterPro" id="IPR036566">
    <property type="entry name" value="PYNP-like_C_sf"/>
</dbReference>
<dbReference type="InterPro" id="IPR013102">
    <property type="entry name" value="PYNP_C"/>
</dbReference>
<dbReference type="InterPro" id="IPR018090">
    <property type="entry name" value="Pyrmidine_PPas_bac/euk"/>
</dbReference>
<dbReference type="InterPro" id="IPR017872">
    <property type="entry name" value="Pyrmidine_PPase_CS"/>
</dbReference>
<dbReference type="InterPro" id="IPR000053">
    <property type="entry name" value="Thymidine/pyrmidine_PPase"/>
</dbReference>
<dbReference type="InterPro" id="IPR013465">
    <property type="entry name" value="Thymidine_Pase"/>
</dbReference>
<dbReference type="NCBIfam" id="NF004490">
    <property type="entry name" value="PRK05820.1"/>
    <property type="match status" value="1"/>
</dbReference>
<dbReference type="NCBIfam" id="TIGR02643">
    <property type="entry name" value="T_phosphoryl"/>
    <property type="match status" value="1"/>
</dbReference>
<dbReference type="NCBIfam" id="TIGR02644">
    <property type="entry name" value="Y_phosphoryl"/>
    <property type="match status" value="1"/>
</dbReference>
<dbReference type="PANTHER" id="PTHR10515">
    <property type="entry name" value="THYMIDINE PHOSPHORYLASE"/>
    <property type="match status" value="1"/>
</dbReference>
<dbReference type="PANTHER" id="PTHR10515:SF0">
    <property type="entry name" value="THYMIDINE PHOSPHORYLASE"/>
    <property type="match status" value="1"/>
</dbReference>
<dbReference type="Pfam" id="PF02885">
    <property type="entry name" value="Glycos_trans_3N"/>
    <property type="match status" value="1"/>
</dbReference>
<dbReference type="Pfam" id="PF00591">
    <property type="entry name" value="Glycos_transf_3"/>
    <property type="match status" value="1"/>
</dbReference>
<dbReference type="Pfam" id="PF07831">
    <property type="entry name" value="PYNP_C"/>
    <property type="match status" value="1"/>
</dbReference>
<dbReference type="PIRSF" id="PIRSF000478">
    <property type="entry name" value="TP_PyNP"/>
    <property type="match status" value="1"/>
</dbReference>
<dbReference type="SMART" id="SM00941">
    <property type="entry name" value="PYNP_C"/>
    <property type="match status" value="1"/>
</dbReference>
<dbReference type="SUPFAM" id="SSF52418">
    <property type="entry name" value="Nucleoside phosphorylase/phosphoribosyltransferase catalytic domain"/>
    <property type="match status" value="1"/>
</dbReference>
<dbReference type="SUPFAM" id="SSF47648">
    <property type="entry name" value="Nucleoside phosphorylase/phosphoribosyltransferase N-terminal domain"/>
    <property type="match status" value="1"/>
</dbReference>
<dbReference type="SUPFAM" id="SSF54680">
    <property type="entry name" value="Pyrimidine nucleoside phosphorylase C-terminal domain"/>
    <property type="match status" value="1"/>
</dbReference>
<dbReference type="PROSITE" id="PS00647">
    <property type="entry name" value="THYMID_PHOSPHORYLASE"/>
    <property type="match status" value="1"/>
</dbReference>
<gene>
    <name evidence="1" type="primary">deoA</name>
    <name type="ordered locus">SSPA4067</name>
</gene>
<sequence>MFLAQEIIRKKRDGHALSDEEIRFFINGIRDNTISEGQIAALAMTIFFHDMTMPERVSLTMAMRDSGTVLDWKSLNLNGPIVDKHSTGGVGDVTSLMLGPMVAACGGYVPMISGRGLGHTGGTLDKLEAIPGFDIFPDDNRFREIIQDVGVAIIGQTSSLAPADKRFYATRDITATVDSIPLITGSILAKKLAEGLDALVMDVKVGSGAFMPTYELSEALAEAIVGVANGAGVRTTALLTDMNQVLASSAGNAVEVREAVQFLTGEYRNPRLFDVTMALCVEMLISGNLAKDDAEARAKLQAVLDNGKAAEVFGRMVAAQKGPSDFVENYDKYLPTAMLSKAVYADTEGFISAMDTRALGMAVVSMGGGRRQASDTIDYSVGFTDMARLGDSIDGQRPLAVIHAKDEASWQEAAKAVKAAIILDDKAPASTPSVYRRITE</sequence>
<comment type="function">
    <text evidence="1">The enzymes which catalyze the reversible phosphorolysis of pyrimidine nucleosides are involved in the degradation of these compounds and in their utilization as carbon and energy sources, or in the rescue of pyrimidine bases for nucleotide synthesis.</text>
</comment>
<comment type="catalytic activity">
    <reaction evidence="1">
        <text>thymidine + phosphate = 2-deoxy-alpha-D-ribose 1-phosphate + thymine</text>
        <dbReference type="Rhea" id="RHEA:16037"/>
        <dbReference type="ChEBI" id="CHEBI:17748"/>
        <dbReference type="ChEBI" id="CHEBI:17821"/>
        <dbReference type="ChEBI" id="CHEBI:43474"/>
        <dbReference type="ChEBI" id="CHEBI:57259"/>
        <dbReference type="EC" id="2.4.2.4"/>
    </reaction>
</comment>
<comment type="pathway">
    <text evidence="1">Pyrimidine metabolism; dTMP biosynthesis via salvage pathway; dTMP from thymine: step 1/2.</text>
</comment>
<comment type="subunit">
    <text evidence="1">Homodimer.</text>
</comment>
<comment type="similarity">
    <text evidence="1">Belongs to the thymidine/pyrimidine-nucleoside phosphorylase family.</text>
</comment>
<name>TYPH_SALPK</name>
<feature type="chain" id="PRO_1000186271" description="Thymidine phosphorylase">
    <location>
        <begin position="1"/>
        <end position="440"/>
    </location>
</feature>
<proteinExistence type="inferred from homology"/>